<dbReference type="EMBL" id="M97690">
    <property type="status" value="NOT_ANNOTATED_CDS"/>
    <property type="molecule type" value="Genomic_DNA"/>
</dbReference>
<dbReference type="EMBL" id="Z74809">
    <property type="protein sequence ID" value="CAA99077.1"/>
    <property type="molecule type" value="Genomic_DNA"/>
</dbReference>
<dbReference type="EMBL" id="AY692940">
    <property type="protein sequence ID" value="AAT92959.1"/>
    <property type="molecule type" value="Genomic_DNA"/>
</dbReference>
<dbReference type="EMBL" id="BK006948">
    <property type="protein sequence ID" value="DAA10716.1"/>
    <property type="molecule type" value="Genomic_DNA"/>
</dbReference>
<dbReference type="PIR" id="S66760">
    <property type="entry name" value="S66760"/>
</dbReference>
<dbReference type="RefSeq" id="NP_014574.1">
    <property type="nucleotide sequence ID" value="NM_001183322.1"/>
</dbReference>
<dbReference type="SMR" id="P32607"/>
<dbReference type="BioGRID" id="34334">
    <property type="interactions" value="472"/>
</dbReference>
<dbReference type="ComplexPortal" id="CPX-828">
    <property type="entry name" value="RTG transcription factor complex"/>
</dbReference>
<dbReference type="DIP" id="DIP-2500N"/>
<dbReference type="FunCoup" id="P32607">
    <property type="interactions" value="455"/>
</dbReference>
<dbReference type="IntAct" id="P32607">
    <property type="interactions" value="13"/>
</dbReference>
<dbReference type="MINT" id="P32607"/>
<dbReference type="STRING" id="4932.YOL067C"/>
<dbReference type="iPTMnet" id="P32607"/>
<dbReference type="PaxDb" id="4932-YOL067C"/>
<dbReference type="PeptideAtlas" id="P32607"/>
<dbReference type="EnsemblFungi" id="YOL067C_mRNA">
    <property type="protein sequence ID" value="YOL067C"/>
    <property type="gene ID" value="YOL067C"/>
</dbReference>
<dbReference type="GeneID" id="854087"/>
<dbReference type="KEGG" id="sce:YOL067C"/>
<dbReference type="AGR" id="SGD:S000005428"/>
<dbReference type="SGD" id="S000005428">
    <property type="gene designation" value="RTG1"/>
</dbReference>
<dbReference type="VEuPathDB" id="FungiDB:YOL067C"/>
<dbReference type="eggNOG" id="ENOG502S1F7">
    <property type="taxonomic scope" value="Eukaryota"/>
</dbReference>
<dbReference type="HOGENOM" id="CLU_115506_0_0_1"/>
<dbReference type="InParanoid" id="P32607"/>
<dbReference type="OMA" id="QNQVDTQ"/>
<dbReference type="OrthoDB" id="690068at2759"/>
<dbReference type="BioCyc" id="YEAST:G3O-33472-MONOMER"/>
<dbReference type="BioGRID-ORCS" id="854087">
    <property type="hits" value="10 hits in 10 CRISPR screens"/>
</dbReference>
<dbReference type="PRO" id="PR:P32607"/>
<dbReference type="Proteomes" id="UP000002311">
    <property type="component" value="Chromosome XV"/>
</dbReference>
<dbReference type="RNAct" id="P32607">
    <property type="molecule type" value="protein"/>
</dbReference>
<dbReference type="GO" id="GO:0005737">
    <property type="term" value="C:cytoplasm"/>
    <property type="evidence" value="ECO:0000314"/>
    <property type="project" value="SGD"/>
</dbReference>
<dbReference type="GO" id="GO:0005634">
    <property type="term" value="C:nucleus"/>
    <property type="evidence" value="ECO:0000314"/>
    <property type="project" value="ComplexPortal"/>
</dbReference>
<dbReference type="GO" id="GO:0005667">
    <property type="term" value="C:transcription regulator complex"/>
    <property type="evidence" value="ECO:0000353"/>
    <property type="project" value="ComplexPortal"/>
</dbReference>
<dbReference type="GO" id="GO:0003677">
    <property type="term" value="F:DNA binding"/>
    <property type="evidence" value="ECO:0007669"/>
    <property type="project" value="UniProtKB-KW"/>
</dbReference>
<dbReference type="GO" id="GO:0000981">
    <property type="term" value="F:DNA-binding transcription factor activity, RNA polymerase II-specific"/>
    <property type="evidence" value="ECO:0000314"/>
    <property type="project" value="SGD"/>
</dbReference>
<dbReference type="GO" id="GO:0046983">
    <property type="term" value="F:protein dimerization activity"/>
    <property type="evidence" value="ECO:0007669"/>
    <property type="project" value="InterPro"/>
</dbReference>
<dbReference type="GO" id="GO:0071400">
    <property type="term" value="P:cellular response to oleic acid"/>
    <property type="evidence" value="ECO:0000315"/>
    <property type="project" value="SGD"/>
</dbReference>
<dbReference type="GO" id="GO:0031930">
    <property type="term" value="P:mitochondria-nucleus signaling pathway"/>
    <property type="evidence" value="ECO:0000314"/>
    <property type="project" value="ComplexPortal"/>
</dbReference>
<dbReference type="GO" id="GO:0016559">
    <property type="term" value="P:peroxisome fission"/>
    <property type="evidence" value="ECO:0000314"/>
    <property type="project" value="ComplexPortal"/>
</dbReference>
<dbReference type="GO" id="GO:0045944">
    <property type="term" value="P:positive regulation of transcription by RNA polymerase II"/>
    <property type="evidence" value="ECO:0000314"/>
    <property type="project" value="SGD"/>
</dbReference>
<dbReference type="GO" id="GO:0006357">
    <property type="term" value="P:regulation of transcription by RNA polymerase II"/>
    <property type="evidence" value="ECO:0000314"/>
    <property type="project" value="ComplexPortal"/>
</dbReference>
<dbReference type="CDD" id="cd11387">
    <property type="entry name" value="bHLHzip_USF_MITF"/>
    <property type="match status" value="1"/>
</dbReference>
<dbReference type="Gene3D" id="4.10.280.10">
    <property type="entry name" value="Helix-loop-helix DNA-binding domain"/>
    <property type="match status" value="1"/>
</dbReference>
<dbReference type="InterPro" id="IPR011598">
    <property type="entry name" value="bHLH_dom"/>
</dbReference>
<dbReference type="InterPro" id="IPR036638">
    <property type="entry name" value="HLH_DNA-bd_sf"/>
</dbReference>
<dbReference type="InterPro" id="IPR051732">
    <property type="entry name" value="USF"/>
</dbReference>
<dbReference type="PANTHER" id="PTHR46117">
    <property type="entry name" value="FI24210P1"/>
    <property type="match status" value="1"/>
</dbReference>
<dbReference type="PANTHER" id="PTHR46117:SF3">
    <property type="entry name" value="FI24210P1"/>
    <property type="match status" value="1"/>
</dbReference>
<dbReference type="Pfam" id="PF00010">
    <property type="entry name" value="HLH"/>
    <property type="match status" value="1"/>
</dbReference>
<dbReference type="SMART" id="SM00353">
    <property type="entry name" value="HLH"/>
    <property type="match status" value="1"/>
</dbReference>
<dbReference type="SUPFAM" id="SSF47459">
    <property type="entry name" value="HLH, helix-loop-helix DNA-binding domain"/>
    <property type="match status" value="1"/>
</dbReference>
<dbReference type="PROSITE" id="PS50888">
    <property type="entry name" value="BHLH"/>
    <property type="match status" value="1"/>
</dbReference>
<sequence length="177" mass="19016">MSSIPAGTDPGSCGANFKNDRKRRDKINDRIQELLSIIPKDFFRDYYGNSGSNDTLSESTPGALGLSSKAKGTGTKDGKPNKGQILTQAVEYISHLQNQVDTQNREEVELMVKATQLAKQTGTIVNDINLENTSAEVALSRIGVGPLAATNDDSVRPPAKRLSSFEYGGYGEYGNGS</sequence>
<proteinExistence type="evidence at protein level"/>
<reference key="1">
    <citation type="journal article" date="1993" name="Cell">
        <title>RTG1 and RTG2: two yeast genes required for a novel path of communication from mitochondria to the nucleus.</title>
        <authorList>
            <person name="Liao X."/>
            <person name="Butow R.A."/>
        </authorList>
    </citation>
    <scope>NUCLEOTIDE SEQUENCE [GENOMIC DNA]</scope>
</reference>
<reference key="2">
    <citation type="journal article" date="1997" name="Yeast">
        <title>Sequence analysis of a 33.2 kb segment from the left arm of yeast chromosome XV reveals eight known genes and ten new open reading frames including homologues of ABC transporters, inositol phosphatases and human expressed sequence tags.</title>
        <authorList>
            <person name="Tzermia M."/>
            <person name="Katsoulou C."/>
            <person name="Alexandraki D."/>
        </authorList>
    </citation>
    <scope>NUCLEOTIDE SEQUENCE [GENOMIC DNA]</scope>
</reference>
<reference key="3">
    <citation type="journal article" date="1997" name="Nature">
        <title>The nucleotide sequence of Saccharomyces cerevisiae chromosome XV.</title>
        <authorList>
            <person name="Dujon B."/>
            <person name="Albermann K."/>
            <person name="Aldea M."/>
            <person name="Alexandraki D."/>
            <person name="Ansorge W."/>
            <person name="Arino J."/>
            <person name="Benes V."/>
            <person name="Bohn C."/>
            <person name="Bolotin-Fukuhara M."/>
            <person name="Bordonne R."/>
            <person name="Boyer J."/>
            <person name="Camasses A."/>
            <person name="Casamayor A."/>
            <person name="Casas C."/>
            <person name="Cheret G."/>
            <person name="Cziepluch C."/>
            <person name="Daignan-Fornier B."/>
            <person name="Dang V.-D."/>
            <person name="de Haan M."/>
            <person name="Delius H."/>
            <person name="Durand P."/>
            <person name="Fairhead C."/>
            <person name="Feldmann H."/>
            <person name="Gaillon L."/>
            <person name="Galisson F."/>
            <person name="Gamo F.-J."/>
            <person name="Gancedo C."/>
            <person name="Goffeau A."/>
            <person name="Goulding S.E."/>
            <person name="Grivell L.A."/>
            <person name="Habbig B."/>
            <person name="Hand N.J."/>
            <person name="Hani J."/>
            <person name="Hattenhorst U."/>
            <person name="Hebling U."/>
            <person name="Hernando Y."/>
            <person name="Herrero E."/>
            <person name="Heumann K."/>
            <person name="Hiesel R."/>
            <person name="Hilger F."/>
            <person name="Hofmann B."/>
            <person name="Hollenberg C.P."/>
            <person name="Hughes B."/>
            <person name="Jauniaux J.-C."/>
            <person name="Kalogeropoulos A."/>
            <person name="Katsoulou C."/>
            <person name="Kordes E."/>
            <person name="Lafuente M.J."/>
            <person name="Landt O."/>
            <person name="Louis E.J."/>
            <person name="Maarse A.C."/>
            <person name="Madania A."/>
            <person name="Mannhaupt G."/>
            <person name="Marck C."/>
            <person name="Martin R.P."/>
            <person name="Mewes H.-W."/>
            <person name="Michaux G."/>
            <person name="Paces V."/>
            <person name="Parle-McDermott A.G."/>
            <person name="Pearson B.M."/>
            <person name="Perrin A."/>
            <person name="Pettersson B."/>
            <person name="Poch O."/>
            <person name="Pohl T.M."/>
            <person name="Poirey R."/>
            <person name="Portetelle D."/>
            <person name="Pujol A."/>
            <person name="Purnelle B."/>
            <person name="Ramezani Rad M."/>
            <person name="Rechmann S."/>
            <person name="Schwager C."/>
            <person name="Schweizer M."/>
            <person name="Sor F."/>
            <person name="Sterky F."/>
            <person name="Tarassov I.A."/>
            <person name="Teodoru C."/>
            <person name="Tettelin H."/>
            <person name="Thierry A."/>
            <person name="Tobiasch E."/>
            <person name="Tzermia M."/>
            <person name="Uhlen M."/>
            <person name="Unseld M."/>
            <person name="Valens M."/>
            <person name="Vandenbol M."/>
            <person name="Vetter I."/>
            <person name="Vlcek C."/>
            <person name="Voet M."/>
            <person name="Volckaert G."/>
            <person name="Voss H."/>
            <person name="Wambutt R."/>
            <person name="Wedler H."/>
            <person name="Wiemann S."/>
            <person name="Winsor B."/>
            <person name="Wolfe K.H."/>
            <person name="Zollner A."/>
            <person name="Zumstein E."/>
            <person name="Kleine K."/>
        </authorList>
    </citation>
    <scope>NUCLEOTIDE SEQUENCE [LARGE SCALE GENOMIC DNA]</scope>
    <source>
        <strain>ATCC 204508 / S288c</strain>
    </source>
</reference>
<reference key="4">
    <citation type="journal article" date="2014" name="G3 (Bethesda)">
        <title>The reference genome sequence of Saccharomyces cerevisiae: Then and now.</title>
        <authorList>
            <person name="Engel S.R."/>
            <person name="Dietrich F.S."/>
            <person name="Fisk D.G."/>
            <person name="Binkley G."/>
            <person name="Balakrishnan R."/>
            <person name="Costanzo M.C."/>
            <person name="Dwight S.S."/>
            <person name="Hitz B.C."/>
            <person name="Karra K."/>
            <person name="Nash R.S."/>
            <person name="Weng S."/>
            <person name="Wong E.D."/>
            <person name="Lloyd P."/>
            <person name="Skrzypek M.S."/>
            <person name="Miyasato S.R."/>
            <person name="Simison M."/>
            <person name="Cherry J.M."/>
        </authorList>
    </citation>
    <scope>GENOME REANNOTATION</scope>
    <source>
        <strain>ATCC 204508 / S288c</strain>
    </source>
</reference>
<reference key="5">
    <citation type="journal article" date="2007" name="Genome Res.">
        <title>Approaching a complete repository of sequence-verified protein-encoding clones for Saccharomyces cerevisiae.</title>
        <authorList>
            <person name="Hu Y."/>
            <person name="Rolfs A."/>
            <person name="Bhullar B."/>
            <person name="Murthy T.V.S."/>
            <person name="Zhu C."/>
            <person name="Berger M.F."/>
            <person name="Camargo A.A."/>
            <person name="Kelley F."/>
            <person name="McCarron S."/>
            <person name="Jepson D."/>
            <person name="Richardson A."/>
            <person name="Raphael J."/>
            <person name="Moreira D."/>
            <person name="Taycher E."/>
            <person name="Zuo D."/>
            <person name="Mohr S."/>
            <person name="Kane M.F."/>
            <person name="Williamson J."/>
            <person name="Simpson A.J.G."/>
            <person name="Bulyk M.L."/>
            <person name="Harlow E."/>
            <person name="Marsischky G."/>
            <person name="Kolodner R.D."/>
            <person name="LaBaer J."/>
        </authorList>
    </citation>
    <scope>NUCLEOTIDE SEQUENCE [GENOMIC DNA]</scope>
    <source>
        <strain>ATCC 204508 / S288c</strain>
    </source>
</reference>
<reference key="6">
    <citation type="journal article" date="2003" name="Nature">
        <title>Global analysis of protein expression in yeast.</title>
        <authorList>
            <person name="Ghaemmaghami S."/>
            <person name="Huh W.-K."/>
            <person name="Bower K."/>
            <person name="Howson R.W."/>
            <person name="Belle A."/>
            <person name="Dephoure N."/>
            <person name="O'Shea E.K."/>
            <person name="Weissman J.S."/>
        </authorList>
    </citation>
    <scope>LEVEL OF PROTEIN EXPRESSION [LARGE SCALE ANALYSIS]</scope>
</reference>
<reference key="7">
    <citation type="journal article" date="2008" name="Mol. Cell. Proteomics">
        <title>A multidimensional chromatography technology for in-depth phosphoproteome analysis.</title>
        <authorList>
            <person name="Albuquerque C.P."/>
            <person name="Smolka M.B."/>
            <person name="Payne S.H."/>
            <person name="Bafna V."/>
            <person name="Eng J."/>
            <person name="Zhou H."/>
        </authorList>
    </citation>
    <scope>PHOSPHORYLATION [LARGE SCALE ANALYSIS] AT SER-52</scope>
    <scope>IDENTIFICATION BY MASS SPECTROMETRY [LARGE SCALE ANALYSIS]</scope>
</reference>
<reference key="8">
    <citation type="journal article" date="2009" name="Science">
        <title>Global analysis of Cdk1 substrate phosphorylation sites provides insights into evolution.</title>
        <authorList>
            <person name="Holt L.J."/>
            <person name="Tuch B.B."/>
            <person name="Villen J."/>
            <person name="Johnson A.D."/>
            <person name="Gygi S.P."/>
            <person name="Morgan D.O."/>
        </authorList>
    </citation>
    <scope>PHOSPHORYLATION [LARGE SCALE ANALYSIS] AT SER-50; SER-52 AND THR-60</scope>
    <scope>IDENTIFICATION BY MASS SPECTROMETRY [LARGE SCALE ANALYSIS]</scope>
</reference>
<evidence type="ECO:0000255" key="1">
    <source>
        <dbReference type="PROSITE-ProRule" id="PRU00981"/>
    </source>
</evidence>
<evidence type="ECO:0000256" key="2">
    <source>
        <dbReference type="SAM" id="MobiDB-lite"/>
    </source>
</evidence>
<evidence type="ECO:0000269" key="3">
    <source>
    </source>
</evidence>
<evidence type="ECO:0000305" key="4"/>
<evidence type="ECO:0007744" key="5">
    <source>
    </source>
</evidence>
<evidence type="ECO:0007744" key="6">
    <source>
    </source>
</evidence>
<gene>
    <name type="primary">RTG1</name>
    <name type="ordered locus">YOL067C</name>
</gene>
<accession>P32607</accession>
<accession>D6W200</accession>
<accession>Q08228</accession>
<protein>
    <recommendedName>
        <fullName>Retrograde regulation protein 1</fullName>
    </recommendedName>
</protein>
<name>RTG1_YEAST</name>
<comment type="function">
    <text>Required for a novel path of interorganelle communication between mitochondria, peroxisomes and the nucleus, thereby maintaining a functional metabolic interaction between the tricarboxylic acid and glyoxylate cycles. Transcription factor that regulates CIT2 gene expression. Binds to two identical sites oriented as inverted repeats 28 bp apart in a regulatory upstream activation sequence element (UASR) in the CIT2 promoter. The core binding site is 5'-GGTCAC-3'.</text>
</comment>
<comment type="subunit">
    <text>Binds DNA as a heterodimer with RTG3.</text>
</comment>
<comment type="interaction">
    <interactant intactId="EBI-16312">
        <id>P32607</id>
    </interactant>
    <interactant intactId="EBI-16328">
        <id>P38165</id>
        <label>RTG3</label>
    </interactant>
    <organismsDiffer>false</organismsDiffer>
    <experiments>5</experiments>
</comment>
<comment type="subcellular location">
    <subcellularLocation>
        <location evidence="4">Nucleus</location>
    </subcellularLocation>
</comment>
<comment type="miscellaneous">
    <text evidence="3">Present with 2190 molecules/cell in log phase SD medium.</text>
</comment>
<feature type="chain" id="PRO_0000127433" description="Retrograde regulation protein 1">
    <location>
        <begin position="1"/>
        <end position="177"/>
    </location>
</feature>
<feature type="domain" description="bHLH" evidence="1">
    <location>
        <begin position="11"/>
        <end position="96"/>
    </location>
</feature>
<feature type="region of interest" description="Disordered" evidence="2">
    <location>
        <begin position="1"/>
        <end position="24"/>
    </location>
</feature>
<feature type="region of interest" description="Disordered" evidence="2">
    <location>
        <begin position="52"/>
        <end position="82"/>
    </location>
</feature>
<feature type="region of interest" description="Disordered" evidence="2">
    <location>
        <begin position="147"/>
        <end position="177"/>
    </location>
</feature>
<feature type="compositionally biased region" description="Gly residues" evidence="2">
    <location>
        <begin position="168"/>
        <end position="177"/>
    </location>
</feature>
<feature type="modified residue" description="Phosphoserine" evidence="6">
    <location>
        <position position="50"/>
    </location>
</feature>
<feature type="modified residue" description="Phosphoserine" evidence="5 6">
    <location>
        <position position="52"/>
    </location>
</feature>
<feature type="modified residue" description="Phosphothreonine" evidence="6">
    <location>
        <position position="60"/>
    </location>
</feature>
<feature type="sequence conflict" description="In Ref. 1." evidence="4" ref="1">
    <original>REEVELMVK</original>
    <variation>KRGGGTDGE</variation>
    <location>
        <begin position="105"/>
        <end position="113"/>
    </location>
</feature>
<organism>
    <name type="scientific">Saccharomyces cerevisiae (strain ATCC 204508 / S288c)</name>
    <name type="common">Baker's yeast</name>
    <dbReference type="NCBI Taxonomy" id="559292"/>
    <lineage>
        <taxon>Eukaryota</taxon>
        <taxon>Fungi</taxon>
        <taxon>Dikarya</taxon>
        <taxon>Ascomycota</taxon>
        <taxon>Saccharomycotina</taxon>
        <taxon>Saccharomycetes</taxon>
        <taxon>Saccharomycetales</taxon>
        <taxon>Saccharomycetaceae</taxon>
        <taxon>Saccharomyces</taxon>
    </lineage>
</organism>
<keyword id="KW-0238">DNA-binding</keyword>
<keyword id="KW-0539">Nucleus</keyword>
<keyword id="KW-0597">Phosphoprotein</keyword>
<keyword id="KW-1185">Reference proteome</keyword>
<keyword id="KW-0804">Transcription</keyword>
<keyword id="KW-0805">Transcription regulation</keyword>